<keyword id="KW-0903">Direct protein sequencing</keyword>
<keyword id="KW-0249">Electron transport</keyword>
<keyword id="KW-0349">Heme</keyword>
<keyword id="KW-0408">Iron</keyword>
<keyword id="KW-0479">Metal-binding</keyword>
<keyword id="KW-0496">Mitochondrion</keyword>
<keyword id="KW-0679">Respiratory chain</keyword>
<keyword id="KW-0813">Transport</keyword>
<evidence type="ECO:0000255" key="1">
    <source>
        <dbReference type="PROSITE-ProRule" id="PRU00433"/>
    </source>
</evidence>
<evidence type="ECO:0000269" key="2">
    <source>
    </source>
</evidence>
<evidence type="ECO:0000305" key="3"/>
<feature type="initiator methionine" description="Removed" evidence="2">
    <location>
        <position position="1"/>
    </location>
</feature>
<feature type="chain" id="PRO_0000108265" description="Cytochrome c">
    <location>
        <begin position="2"/>
        <end position="108"/>
    </location>
</feature>
<feature type="binding site" description="covalent" evidence="1 2">
    <location>
        <position position="19"/>
    </location>
    <ligand>
        <name>heme c</name>
        <dbReference type="ChEBI" id="CHEBI:61717"/>
    </ligand>
</feature>
<feature type="binding site" description="covalent" evidence="1 2">
    <location>
        <position position="22"/>
    </location>
    <ligand>
        <name>heme c</name>
        <dbReference type="ChEBI" id="CHEBI:61717"/>
    </ligand>
</feature>
<feature type="binding site" description="axial binding residue">
    <location>
        <position position="23"/>
    </location>
    <ligand>
        <name>heme c</name>
        <dbReference type="ChEBI" id="CHEBI:61717"/>
    </ligand>
    <ligandPart>
        <name>Fe</name>
        <dbReference type="ChEBI" id="CHEBI:18248"/>
    </ligandPart>
</feature>
<feature type="binding site" description="axial binding residue">
    <location>
        <position position="85"/>
    </location>
    <ligand>
        <name>heme c</name>
        <dbReference type="ChEBI" id="CHEBI:61717"/>
    </ligand>
    <ligandPart>
        <name>Fe</name>
        <dbReference type="ChEBI" id="CHEBI:18248"/>
    </ligandPart>
</feature>
<accession>P00037</accession>
<protein>
    <recommendedName>
        <fullName>Cytochrome c</fullName>
    </recommendedName>
</protein>
<comment type="function">
    <text>Electron carrier protein. The oxidized form of the cytochrome c heme group can accept an electron from the heme group of the cytochrome c1 subunit of cytochrome reductase. Cytochrome c then transfers this electron to the cytochrome oxidase complex, the final protein carrier in the mitochondrial electron-transport chain.</text>
</comment>
<comment type="subcellular location">
    <subcellularLocation>
        <location>Mitochondrion intermembrane space</location>
    </subcellularLocation>
    <text>Loosely associated with the inner membrane.</text>
</comment>
<comment type="PTM">
    <text>Binds 1 heme c group covalently per subunit.</text>
</comment>
<comment type="similarity">
    <text evidence="3">Belongs to the cytochrome c family.</text>
</comment>
<comment type="online information" name="Protein Spotlight">
    <link uri="https://www.proteinspotlight.org/back_issues/076"/>
    <text>Life shuttle - Issue 76 of November 2006</text>
</comment>
<name>CYC_SAMCY</name>
<proteinExistence type="evidence at protein level"/>
<reference key="1">
    <citation type="journal article" date="1966" name="J. Biol. Chem.">
        <title>Properties and primary structure of the cytochrome c from the flight muscles of the moth, Samia cynthia.</title>
        <authorList>
            <person name="Chan S.K."/>
            <person name="Margoliash E."/>
        </authorList>
    </citation>
    <scope>PROTEIN SEQUENCE OF 2-108</scope>
</reference>
<sequence length="108" mass="11763">MGVPAGNAENGKKIFVQRCAQCHTVEAGGKHKVGPNLHGFYGRKTGQAPGFSYSNANKAKGITWGDDTLFEYLENPKKYIPGTKMVFAGLKKANERADLIAYLKESTK</sequence>
<organism>
    <name type="scientific">Samia cynthia</name>
    <name type="common">Ailanthus silkmoth</name>
    <name type="synonym">Phalaena cynthia</name>
    <dbReference type="NCBI Taxonomy" id="7127"/>
    <lineage>
        <taxon>Eukaryota</taxon>
        <taxon>Metazoa</taxon>
        <taxon>Ecdysozoa</taxon>
        <taxon>Arthropoda</taxon>
        <taxon>Hexapoda</taxon>
        <taxon>Insecta</taxon>
        <taxon>Pterygota</taxon>
        <taxon>Neoptera</taxon>
        <taxon>Endopterygota</taxon>
        <taxon>Lepidoptera</taxon>
        <taxon>Glossata</taxon>
        <taxon>Ditrysia</taxon>
        <taxon>Bombycoidea</taxon>
        <taxon>Saturniidae</taxon>
        <taxon>Saturniinae</taxon>
        <taxon>Attacini</taxon>
        <taxon>Samia</taxon>
    </lineage>
</organism>
<dbReference type="PIR" id="A00032">
    <property type="entry name" value="CCMT"/>
</dbReference>
<dbReference type="SMR" id="P00037"/>
<dbReference type="GO" id="GO:0005758">
    <property type="term" value="C:mitochondrial intermembrane space"/>
    <property type="evidence" value="ECO:0007669"/>
    <property type="project" value="UniProtKB-SubCell"/>
</dbReference>
<dbReference type="GO" id="GO:0009055">
    <property type="term" value="F:electron transfer activity"/>
    <property type="evidence" value="ECO:0007669"/>
    <property type="project" value="InterPro"/>
</dbReference>
<dbReference type="GO" id="GO:0020037">
    <property type="term" value="F:heme binding"/>
    <property type="evidence" value="ECO:0007669"/>
    <property type="project" value="InterPro"/>
</dbReference>
<dbReference type="GO" id="GO:0046872">
    <property type="term" value="F:metal ion binding"/>
    <property type="evidence" value="ECO:0007669"/>
    <property type="project" value="UniProtKB-KW"/>
</dbReference>
<dbReference type="FunFam" id="1.10.760.10:FF:000001">
    <property type="entry name" value="Cytochrome c iso-1"/>
    <property type="match status" value="1"/>
</dbReference>
<dbReference type="Gene3D" id="1.10.760.10">
    <property type="entry name" value="Cytochrome c-like domain"/>
    <property type="match status" value="1"/>
</dbReference>
<dbReference type="InterPro" id="IPR009056">
    <property type="entry name" value="Cyt_c-like_dom"/>
</dbReference>
<dbReference type="InterPro" id="IPR036909">
    <property type="entry name" value="Cyt_c-like_dom_sf"/>
</dbReference>
<dbReference type="InterPro" id="IPR002327">
    <property type="entry name" value="Cyt_c_1A/1B"/>
</dbReference>
<dbReference type="PANTHER" id="PTHR11961">
    <property type="entry name" value="CYTOCHROME C"/>
    <property type="match status" value="1"/>
</dbReference>
<dbReference type="Pfam" id="PF00034">
    <property type="entry name" value="Cytochrom_C"/>
    <property type="match status" value="1"/>
</dbReference>
<dbReference type="PRINTS" id="PR00604">
    <property type="entry name" value="CYTCHRMECIAB"/>
</dbReference>
<dbReference type="SUPFAM" id="SSF46626">
    <property type="entry name" value="Cytochrome c"/>
    <property type="match status" value="1"/>
</dbReference>
<dbReference type="PROSITE" id="PS51007">
    <property type="entry name" value="CYTC"/>
    <property type="match status" value="1"/>
</dbReference>